<keyword id="KW-0963">Cytoplasm</keyword>
<keyword id="KW-0251">Elongation factor</keyword>
<keyword id="KW-0342">GTP-binding</keyword>
<keyword id="KW-0378">Hydrolase</keyword>
<keyword id="KW-0460">Magnesium</keyword>
<keyword id="KW-0479">Metal-binding</keyword>
<keyword id="KW-0547">Nucleotide-binding</keyword>
<keyword id="KW-0648">Protein biosynthesis</keyword>
<keyword id="KW-1185">Reference proteome</keyword>
<feature type="chain" id="PRO_1000201418" description="Elongation factor Tu">
    <location>
        <begin position="1"/>
        <end position="398"/>
    </location>
</feature>
<feature type="domain" description="tr-type G">
    <location>
        <begin position="10"/>
        <end position="207"/>
    </location>
</feature>
<feature type="region of interest" description="G1" evidence="1">
    <location>
        <begin position="19"/>
        <end position="26"/>
    </location>
</feature>
<feature type="region of interest" description="G2" evidence="1">
    <location>
        <begin position="63"/>
        <end position="67"/>
    </location>
</feature>
<feature type="region of interest" description="G3" evidence="1">
    <location>
        <begin position="84"/>
        <end position="87"/>
    </location>
</feature>
<feature type="region of interest" description="G4" evidence="1">
    <location>
        <begin position="139"/>
        <end position="142"/>
    </location>
</feature>
<feature type="region of interest" description="G5" evidence="1">
    <location>
        <begin position="177"/>
        <end position="179"/>
    </location>
</feature>
<feature type="binding site" evidence="2">
    <location>
        <begin position="19"/>
        <end position="26"/>
    </location>
    <ligand>
        <name>GTP</name>
        <dbReference type="ChEBI" id="CHEBI:37565"/>
    </ligand>
</feature>
<feature type="binding site" evidence="2">
    <location>
        <position position="26"/>
    </location>
    <ligand>
        <name>Mg(2+)</name>
        <dbReference type="ChEBI" id="CHEBI:18420"/>
    </ligand>
</feature>
<feature type="binding site" evidence="2">
    <location>
        <begin position="84"/>
        <end position="88"/>
    </location>
    <ligand>
        <name>GTP</name>
        <dbReference type="ChEBI" id="CHEBI:37565"/>
    </ligand>
</feature>
<feature type="binding site" evidence="2">
    <location>
        <begin position="139"/>
        <end position="142"/>
    </location>
    <ligand>
        <name>GTP</name>
        <dbReference type="ChEBI" id="CHEBI:37565"/>
    </ligand>
</feature>
<dbReference type="EC" id="3.6.5.3" evidence="2"/>
<dbReference type="EMBL" id="AM946015">
    <property type="protein sequence ID" value="CAR41417.1"/>
    <property type="molecule type" value="Genomic_DNA"/>
</dbReference>
<dbReference type="RefSeq" id="WP_012658127.1">
    <property type="nucleotide sequence ID" value="NC_012004.1"/>
</dbReference>
<dbReference type="SMR" id="B9DRL9"/>
<dbReference type="STRING" id="218495.SUB0604"/>
<dbReference type="KEGG" id="sub:SUB0604"/>
<dbReference type="eggNOG" id="COG0050">
    <property type="taxonomic scope" value="Bacteria"/>
</dbReference>
<dbReference type="HOGENOM" id="CLU_007265_0_1_9"/>
<dbReference type="OrthoDB" id="9804504at2"/>
<dbReference type="Proteomes" id="UP000000449">
    <property type="component" value="Chromosome"/>
</dbReference>
<dbReference type="GO" id="GO:0005829">
    <property type="term" value="C:cytosol"/>
    <property type="evidence" value="ECO:0007669"/>
    <property type="project" value="TreeGrafter"/>
</dbReference>
<dbReference type="GO" id="GO:0005525">
    <property type="term" value="F:GTP binding"/>
    <property type="evidence" value="ECO:0007669"/>
    <property type="project" value="UniProtKB-UniRule"/>
</dbReference>
<dbReference type="GO" id="GO:0003924">
    <property type="term" value="F:GTPase activity"/>
    <property type="evidence" value="ECO:0007669"/>
    <property type="project" value="InterPro"/>
</dbReference>
<dbReference type="GO" id="GO:0003746">
    <property type="term" value="F:translation elongation factor activity"/>
    <property type="evidence" value="ECO:0007669"/>
    <property type="project" value="UniProtKB-UniRule"/>
</dbReference>
<dbReference type="CDD" id="cd01884">
    <property type="entry name" value="EF_Tu"/>
    <property type="match status" value="1"/>
</dbReference>
<dbReference type="CDD" id="cd03697">
    <property type="entry name" value="EFTU_II"/>
    <property type="match status" value="1"/>
</dbReference>
<dbReference type="CDD" id="cd03707">
    <property type="entry name" value="EFTU_III"/>
    <property type="match status" value="1"/>
</dbReference>
<dbReference type="FunFam" id="2.40.30.10:FF:000001">
    <property type="entry name" value="Elongation factor Tu"/>
    <property type="match status" value="1"/>
</dbReference>
<dbReference type="FunFam" id="3.40.50.300:FF:000003">
    <property type="entry name" value="Elongation factor Tu"/>
    <property type="match status" value="1"/>
</dbReference>
<dbReference type="Gene3D" id="3.40.50.300">
    <property type="entry name" value="P-loop containing nucleotide triphosphate hydrolases"/>
    <property type="match status" value="1"/>
</dbReference>
<dbReference type="Gene3D" id="2.40.30.10">
    <property type="entry name" value="Translation factors"/>
    <property type="match status" value="2"/>
</dbReference>
<dbReference type="HAMAP" id="MF_00118_B">
    <property type="entry name" value="EF_Tu_B"/>
    <property type="match status" value="1"/>
</dbReference>
<dbReference type="InterPro" id="IPR041709">
    <property type="entry name" value="EF-Tu_GTP-bd"/>
</dbReference>
<dbReference type="InterPro" id="IPR050055">
    <property type="entry name" value="EF-Tu_GTPase"/>
</dbReference>
<dbReference type="InterPro" id="IPR004161">
    <property type="entry name" value="EFTu-like_2"/>
</dbReference>
<dbReference type="InterPro" id="IPR033720">
    <property type="entry name" value="EFTU_2"/>
</dbReference>
<dbReference type="InterPro" id="IPR031157">
    <property type="entry name" value="G_TR_CS"/>
</dbReference>
<dbReference type="InterPro" id="IPR027417">
    <property type="entry name" value="P-loop_NTPase"/>
</dbReference>
<dbReference type="InterPro" id="IPR005225">
    <property type="entry name" value="Small_GTP-bd"/>
</dbReference>
<dbReference type="InterPro" id="IPR000795">
    <property type="entry name" value="T_Tr_GTP-bd_dom"/>
</dbReference>
<dbReference type="InterPro" id="IPR009000">
    <property type="entry name" value="Transl_B-barrel_sf"/>
</dbReference>
<dbReference type="InterPro" id="IPR009001">
    <property type="entry name" value="Transl_elong_EF1A/Init_IF2_C"/>
</dbReference>
<dbReference type="InterPro" id="IPR004541">
    <property type="entry name" value="Transl_elong_EFTu/EF1A_bac/org"/>
</dbReference>
<dbReference type="InterPro" id="IPR004160">
    <property type="entry name" value="Transl_elong_EFTu/EF1A_C"/>
</dbReference>
<dbReference type="NCBIfam" id="TIGR00485">
    <property type="entry name" value="EF-Tu"/>
    <property type="match status" value="1"/>
</dbReference>
<dbReference type="NCBIfam" id="NF000766">
    <property type="entry name" value="PRK00049.1"/>
    <property type="match status" value="1"/>
</dbReference>
<dbReference type="NCBIfam" id="NF009372">
    <property type="entry name" value="PRK12735.1"/>
    <property type="match status" value="1"/>
</dbReference>
<dbReference type="NCBIfam" id="NF009373">
    <property type="entry name" value="PRK12736.1"/>
    <property type="match status" value="1"/>
</dbReference>
<dbReference type="NCBIfam" id="TIGR00231">
    <property type="entry name" value="small_GTP"/>
    <property type="match status" value="1"/>
</dbReference>
<dbReference type="PANTHER" id="PTHR43721:SF22">
    <property type="entry name" value="ELONGATION FACTOR TU, MITOCHONDRIAL"/>
    <property type="match status" value="1"/>
</dbReference>
<dbReference type="PANTHER" id="PTHR43721">
    <property type="entry name" value="ELONGATION FACTOR TU-RELATED"/>
    <property type="match status" value="1"/>
</dbReference>
<dbReference type="Pfam" id="PF00009">
    <property type="entry name" value="GTP_EFTU"/>
    <property type="match status" value="1"/>
</dbReference>
<dbReference type="Pfam" id="PF03144">
    <property type="entry name" value="GTP_EFTU_D2"/>
    <property type="match status" value="1"/>
</dbReference>
<dbReference type="Pfam" id="PF03143">
    <property type="entry name" value="GTP_EFTU_D3"/>
    <property type="match status" value="1"/>
</dbReference>
<dbReference type="PRINTS" id="PR00315">
    <property type="entry name" value="ELONGATNFCT"/>
</dbReference>
<dbReference type="SUPFAM" id="SSF50465">
    <property type="entry name" value="EF-Tu/eEF-1alpha/eIF2-gamma C-terminal domain"/>
    <property type="match status" value="1"/>
</dbReference>
<dbReference type="SUPFAM" id="SSF52540">
    <property type="entry name" value="P-loop containing nucleoside triphosphate hydrolases"/>
    <property type="match status" value="1"/>
</dbReference>
<dbReference type="SUPFAM" id="SSF50447">
    <property type="entry name" value="Translation proteins"/>
    <property type="match status" value="1"/>
</dbReference>
<dbReference type="PROSITE" id="PS00301">
    <property type="entry name" value="G_TR_1"/>
    <property type="match status" value="1"/>
</dbReference>
<dbReference type="PROSITE" id="PS51722">
    <property type="entry name" value="G_TR_2"/>
    <property type="match status" value="1"/>
</dbReference>
<name>EFTU_STRU0</name>
<reference key="1">
    <citation type="journal article" date="2009" name="BMC Genomics">
        <title>Evidence for niche adaptation in the genome of the bovine pathogen Streptococcus uberis.</title>
        <authorList>
            <person name="Ward P.N."/>
            <person name="Holden M.T.G."/>
            <person name="Leigh J.A."/>
            <person name="Lennard N."/>
            <person name="Bignell A."/>
            <person name="Barron A."/>
            <person name="Clark L."/>
            <person name="Quail M.A."/>
            <person name="Woodward J."/>
            <person name="Barrell B.G."/>
            <person name="Egan S.A."/>
            <person name="Field T.R."/>
            <person name="Maskell D."/>
            <person name="Kehoe M."/>
            <person name="Dowson C.G."/>
            <person name="Chanter N."/>
            <person name="Whatmore A.M."/>
            <person name="Bentley S.D."/>
            <person name="Parkhill J."/>
        </authorList>
    </citation>
    <scope>NUCLEOTIDE SEQUENCE [LARGE SCALE GENOMIC DNA]</scope>
    <source>
        <strain>ATCC BAA-854 / 0140J</strain>
    </source>
</reference>
<accession>B9DRL9</accession>
<protein>
    <recommendedName>
        <fullName evidence="2">Elongation factor Tu</fullName>
        <shortName evidence="2">EF-Tu</shortName>
        <ecNumber evidence="2">3.6.5.3</ecNumber>
    </recommendedName>
</protein>
<comment type="function">
    <text evidence="2">GTP hydrolase that promotes the GTP-dependent binding of aminoacyl-tRNA to the A-site of ribosomes during protein biosynthesis.</text>
</comment>
<comment type="catalytic activity">
    <reaction evidence="2">
        <text>GTP + H2O = GDP + phosphate + H(+)</text>
        <dbReference type="Rhea" id="RHEA:19669"/>
        <dbReference type="ChEBI" id="CHEBI:15377"/>
        <dbReference type="ChEBI" id="CHEBI:15378"/>
        <dbReference type="ChEBI" id="CHEBI:37565"/>
        <dbReference type="ChEBI" id="CHEBI:43474"/>
        <dbReference type="ChEBI" id="CHEBI:58189"/>
        <dbReference type="EC" id="3.6.5.3"/>
    </reaction>
    <physiologicalReaction direction="left-to-right" evidence="2">
        <dbReference type="Rhea" id="RHEA:19670"/>
    </physiologicalReaction>
</comment>
<comment type="subunit">
    <text evidence="2">Monomer.</text>
</comment>
<comment type="subcellular location">
    <subcellularLocation>
        <location evidence="2">Cytoplasm</location>
    </subcellularLocation>
</comment>
<comment type="similarity">
    <text evidence="2">Belongs to the TRAFAC class translation factor GTPase superfamily. Classic translation factor GTPase family. EF-Tu/EF-1A subfamily.</text>
</comment>
<evidence type="ECO:0000250" key="1"/>
<evidence type="ECO:0000255" key="2">
    <source>
        <dbReference type="HAMAP-Rule" id="MF_00118"/>
    </source>
</evidence>
<gene>
    <name evidence="2" type="primary">tuf</name>
    <name type="ordered locus">SUB0604</name>
</gene>
<organism>
    <name type="scientific">Streptococcus uberis (strain ATCC BAA-854 / 0140J)</name>
    <dbReference type="NCBI Taxonomy" id="218495"/>
    <lineage>
        <taxon>Bacteria</taxon>
        <taxon>Bacillati</taxon>
        <taxon>Bacillota</taxon>
        <taxon>Bacilli</taxon>
        <taxon>Lactobacillales</taxon>
        <taxon>Streptococcaceae</taxon>
        <taxon>Streptococcus</taxon>
    </lineage>
</organism>
<proteinExistence type="inferred from homology"/>
<sequence length="398" mass="43914">MAKEKYDRSKPHVNIGTIGHVDHGKTTLTAAITTVLARRLPTSVNQPKDYASIDAAPEERERGITINTAHVEYETETRHYAHIDAPGHADYVKNMITGAAQMDGAILVVASTDGPMPQTREHILLSRQVGVKHLIVFMNKIDLVDDEELLELVEMEIRDLLSEYDFPGDDLPVIQGSALKALEGDSKYEDIIMELMKTADEYIPEPERDTDKPLLLPVEDVFSITGRGTVASGRIDRGTVRVNDEIEIVGIKEETKKAVVTGVEMFRKQLDEGLAGDNVGILLRGVQRDEIERGQVIAKPGSINPHTKFKGEVYILSKDEGGRHTPFFNNYRPQFYFRTTDVTGSIELPAGTEMVMPGDNVTISVELIHPIAVEQGTTFSIREGGRTVGSGIVSEIEA</sequence>